<organism>
    <name type="scientific">Bos taurus</name>
    <name type="common">Bovine</name>
    <dbReference type="NCBI Taxonomy" id="9913"/>
    <lineage>
        <taxon>Eukaryota</taxon>
        <taxon>Metazoa</taxon>
        <taxon>Chordata</taxon>
        <taxon>Craniata</taxon>
        <taxon>Vertebrata</taxon>
        <taxon>Euteleostomi</taxon>
        <taxon>Mammalia</taxon>
        <taxon>Eutheria</taxon>
        <taxon>Laurasiatheria</taxon>
        <taxon>Artiodactyla</taxon>
        <taxon>Ruminantia</taxon>
        <taxon>Pecora</taxon>
        <taxon>Bovidae</taxon>
        <taxon>Bovinae</taxon>
        <taxon>Bos</taxon>
    </lineage>
</organism>
<feature type="signal peptide" evidence="1">
    <location>
        <begin position="1"/>
        <end position="25"/>
    </location>
</feature>
<feature type="chain" id="PRO_0000244882" description="Protein disulfide-isomerase A5">
    <location>
        <begin position="26"/>
        <end position="521"/>
    </location>
</feature>
<feature type="domain" description="Thioredoxin 1" evidence="2">
    <location>
        <begin position="136"/>
        <end position="263"/>
    </location>
</feature>
<feature type="domain" description="Thioredoxin 2" evidence="2">
    <location>
        <begin position="274"/>
        <end position="386"/>
    </location>
</feature>
<feature type="domain" description="Thioredoxin 3" evidence="2">
    <location>
        <begin position="387"/>
        <end position="508"/>
    </location>
</feature>
<feature type="short sequence motif" description="Prevents secretion from ER" evidence="3">
    <location>
        <begin position="518"/>
        <end position="521"/>
    </location>
</feature>
<feature type="disulfide bond" description="Redox-active" evidence="2">
    <location>
        <begin position="184"/>
        <end position="187"/>
    </location>
</feature>
<feature type="disulfide bond" description="Redox-active" evidence="2">
    <location>
        <begin position="307"/>
        <end position="310"/>
    </location>
</feature>
<feature type="disulfide bond" description="Redox-active" evidence="2">
    <location>
        <begin position="428"/>
        <end position="431"/>
    </location>
</feature>
<sequence>MARVVPAWLLLPLAVWVVLPTWLSSAKFSSLIERISDPKDLKKLLRTRNNVLVLYSKSEAAAESHLKLLSTVAQAVKGQGTICWVDCGDAESRKLCKKMKVDLSAKDKKVELFHYQDGAFHTEYNRAVTFKSIVAFLKDPKGPPLWEEDPGAKDVVHIDNEKDFRRLLKKEEKPILMMFYAPWCSVCKRIMPHFQKAATQLRGQFVLAGMNVYPSEFENIKEEYSVRGYPTICYFEKGRFLFQYDSYGSTAEDIVEWLKNPQPPQPQVPETPWADEGGSVYHLSDEDFDQFVKEHSSVLVMFHAPWCGHCKKMKPEFESAAEVLHGEGDSSGVLAAVDATVNKALAERFHIAEFPTLKYFKNGEKYAVPALRTKKSFIEWMRNPESPPPPDPAWEEQQTSVLHLSGDNFRETLKRKKHALVMFYAPWCPHCKKAIPHFTAAADAFKDDRKIACAAIDCVKENNKDLCQQEAVKAYPTFHYYHYGKFVEKYDTNPTELGFTSFIRTLREGDHERLGKKKEEL</sequence>
<name>PDIA5_BOVIN</name>
<accession>Q2KIL5</accession>
<proteinExistence type="evidence at transcript level"/>
<keyword id="KW-1015">Disulfide bond</keyword>
<keyword id="KW-0256">Endoplasmic reticulum</keyword>
<keyword id="KW-0413">Isomerase</keyword>
<keyword id="KW-0676">Redox-active center</keyword>
<keyword id="KW-1185">Reference proteome</keyword>
<keyword id="KW-0677">Repeat</keyword>
<keyword id="KW-0732">Signal</keyword>
<gene>
    <name type="primary">PDIA5</name>
</gene>
<reference key="1">
    <citation type="submission" date="2006-01" db="EMBL/GenBank/DDBJ databases">
        <authorList>
            <consortium name="NIH - Mammalian Gene Collection (MGC) project"/>
        </authorList>
    </citation>
    <scope>NUCLEOTIDE SEQUENCE [LARGE SCALE MRNA]</scope>
    <source>
        <strain>Hereford</strain>
        <tissue>Testis</tissue>
    </source>
</reference>
<evidence type="ECO:0000255" key="1"/>
<evidence type="ECO:0000255" key="2">
    <source>
        <dbReference type="PROSITE-ProRule" id="PRU00691"/>
    </source>
</evidence>
<evidence type="ECO:0000255" key="3">
    <source>
        <dbReference type="PROSITE-ProRule" id="PRU10138"/>
    </source>
</evidence>
<evidence type="ECO:0000305" key="4"/>
<comment type="catalytic activity">
    <reaction>
        <text>Catalyzes the rearrangement of -S-S- bonds in proteins.</text>
        <dbReference type="EC" id="5.3.4.1"/>
    </reaction>
</comment>
<comment type="subcellular location">
    <subcellularLocation>
        <location evidence="3">Endoplasmic reticulum lumen</location>
    </subcellularLocation>
</comment>
<comment type="similarity">
    <text evidence="4">Belongs to the protein disulfide isomerase family.</text>
</comment>
<protein>
    <recommendedName>
        <fullName>Protein disulfide-isomerase A5</fullName>
        <ecNumber>5.3.4.1</ecNumber>
    </recommendedName>
</protein>
<dbReference type="EC" id="5.3.4.1"/>
<dbReference type="EMBL" id="BC112593">
    <property type="protein sequence ID" value="AAI12594.1"/>
    <property type="molecule type" value="mRNA"/>
</dbReference>
<dbReference type="RefSeq" id="NP_001039556.1">
    <property type="nucleotide sequence ID" value="NM_001046091.2"/>
</dbReference>
<dbReference type="SMR" id="Q2KIL5"/>
<dbReference type="FunCoup" id="Q2KIL5">
    <property type="interactions" value="1048"/>
</dbReference>
<dbReference type="STRING" id="9913.ENSBTAP00000025128"/>
<dbReference type="PaxDb" id="9913-ENSBTAP00000025128"/>
<dbReference type="GeneID" id="511603"/>
<dbReference type="KEGG" id="bta:511603"/>
<dbReference type="CTD" id="10954"/>
<dbReference type="VEuPathDB" id="HostDB:ENSBTAG00000018877"/>
<dbReference type="eggNOG" id="KOG0191">
    <property type="taxonomic scope" value="Eukaryota"/>
</dbReference>
<dbReference type="HOGENOM" id="CLU_021181_1_0_1"/>
<dbReference type="InParanoid" id="Q2KIL5"/>
<dbReference type="OMA" id="FCKKMKP"/>
<dbReference type="OrthoDB" id="74910at2759"/>
<dbReference type="TreeFam" id="TF106379"/>
<dbReference type="Proteomes" id="UP000009136">
    <property type="component" value="Chromosome 1"/>
</dbReference>
<dbReference type="Bgee" id="ENSBTAG00000018877">
    <property type="expression patterns" value="Expressed in spermatocyte and 106 other cell types or tissues"/>
</dbReference>
<dbReference type="GO" id="GO:0005783">
    <property type="term" value="C:endoplasmic reticulum"/>
    <property type="evidence" value="ECO:0000318"/>
    <property type="project" value="GO_Central"/>
</dbReference>
<dbReference type="GO" id="GO:0005788">
    <property type="term" value="C:endoplasmic reticulum lumen"/>
    <property type="evidence" value="ECO:0007669"/>
    <property type="project" value="UniProtKB-SubCell"/>
</dbReference>
<dbReference type="GO" id="GO:0003756">
    <property type="term" value="F:protein disulfide isomerase activity"/>
    <property type="evidence" value="ECO:0000318"/>
    <property type="project" value="GO_Central"/>
</dbReference>
<dbReference type="GO" id="GO:0006457">
    <property type="term" value="P:protein folding"/>
    <property type="evidence" value="ECO:0000318"/>
    <property type="project" value="GO_Central"/>
</dbReference>
<dbReference type="CDD" id="cd02997">
    <property type="entry name" value="PDI_a_PDIR"/>
    <property type="match status" value="3"/>
</dbReference>
<dbReference type="CDD" id="cd03067">
    <property type="entry name" value="PDI_b_PDIR_N"/>
    <property type="match status" value="1"/>
</dbReference>
<dbReference type="FunFam" id="3.40.30.10:FF:000029">
    <property type="entry name" value="protein disulfide-isomerase A5 isoform X2"/>
    <property type="match status" value="3"/>
</dbReference>
<dbReference type="FunFam" id="3.40.30.10:FF:000105">
    <property type="entry name" value="protein disulfide-isomerase A5 isoform X2"/>
    <property type="match status" value="1"/>
</dbReference>
<dbReference type="Gene3D" id="3.40.30.10">
    <property type="entry name" value="Glutaredoxin"/>
    <property type="match status" value="4"/>
</dbReference>
<dbReference type="InterPro" id="IPR051063">
    <property type="entry name" value="PDI"/>
</dbReference>
<dbReference type="InterPro" id="IPR046374">
    <property type="entry name" value="PDI_a_PDIR"/>
</dbReference>
<dbReference type="InterPro" id="IPR041865">
    <property type="entry name" value="PDI_b_PDIR_N"/>
</dbReference>
<dbReference type="InterPro" id="IPR036249">
    <property type="entry name" value="Thioredoxin-like_sf"/>
</dbReference>
<dbReference type="InterPro" id="IPR017937">
    <property type="entry name" value="Thioredoxin_CS"/>
</dbReference>
<dbReference type="InterPro" id="IPR013766">
    <property type="entry name" value="Thioredoxin_domain"/>
</dbReference>
<dbReference type="PANTHER" id="PTHR45672:SF2">
    <property type="entry name" value="PROTEIN DISULFIDE-ISOMERASE A5"/>
    <property type="match status" value="1"/>
</dbReference>
<dbReference type="PANTHER" id="PTHR45672">
    <property type="entry name" value="PROTEIN DISULFIDE-ISOMERASE C17H9.14C-RELATED"/>
    <property type="match status" value="1"/>
</dbReference>
<dbReference type="Pfam" id="PF00085">
    <property type="entry name" value="Thioredoxin"/>
    <property type="match status" value="3"/>
</dbReference>
<dbReference type="PRINTS" id="PR00421">
    <property type="entry name" value="THIOREDOXIN"/>
</dbReference>
<dbReference type="SUPFAM" id="SSF52833">
    <property type="entry name" value="Thioredoxin-like"/>
    <property type="match status" value="4"/>
</dbReference>
<dbReference type="PROSITE" id="PS00014">
    <property type="entry name" value="ER_TARGET"/>
    <property type="match status" value="1"/>
</dbReference>
<dbReference type="PROSITE" id="PS00194">
    <property type="entry name" value="THIOREDOXIN_1"/>
    <property type="match status" value="1"/>
</dbReference>
<dbReference type="PROSITE" id="PS51352">
    <property type="entry name" value="THIOREDOXIN_2"/>
    <property type="match status" value="3"/>
</dbReference>